<reference key="1">
    <citation type="journal article" date="2010" name="Nature">
        <title>Genome sequence of the palaeopolyploid soybean.</title>
        <authorList>
            <person name="Schmutz J."/>
            <person name="Cannon S.B."/>
            <person name="Schlueter J."/>
            <person name="Ma J."/>
            <person name="Mitros T."/>
            <person name="Nelson W."/>
            <person name="Hyten D.L."/>
            <person name="Song Q."/>
            <person name="Thelen J.J."/>
            <person name="Cheng J."/>
            <person name="Xu D."/>
            <person name="Hellsten U."/>
            <person name="May G.D."/>
            <person name="Yu Y."/>
            <person name="Sakurai T."/>
            <person name="Umezawa T."/>
            <person name="Bhattacharyya M.K."/>
            <person name="Sandhu D."/>
            <person name="Valliyodan B."/>
            <person name="Lindquist E."/>
            <person name="Peto M."/>
            <person name="Grant D."/>
            <person name="Shu S."/>
            <person name="Goodstein D."/>
            <person name="Barry K."/>
            <person name="Futrell-Griggs M."/>
            <person name="Abernathy B."/>
            <person name="Du J."/>
            <person name="Tian Z."/>
            <person name="Zhu L."/>
            <person name="Gill N."/>
            <person name="Joshi T."/>
            <person name="Libault M."/>
            <person name="Sethuraman A."/>
            <person name="Zhang X.-C."/>
            <person name="Shinozaki K."/>
            <person name="Nguyen H.T."/>
            <person name="Wing R.A."/>
            <person name="Cregan P."/>
            <person name="Specht J."/>
            <person name="Grimwood J."/>
            <person name="Rokhsar D."/>
            <person name="Stacey G."/>
            <person name="Shoemaker R.C."/>
            <person name="Jackson S.A."/>
        </authorList>
    </citation>
    <scope>NUCLEOTIDE SEQUENCE [LARGE SCALE GENOMIC DNA]</scope>
    <source>
        <strain>cv. Williams 82</strain>
        <tissue>Callus</tissue>
    </source>
</reference>
<reference key="2">
    <citation type="journal article" date="2024" name="Environ. Exp. Bot.">
        <title>The GmCYP2-GmHAL3 module regulates salt tolerance in soybean seedlings.</title>
        <authorList>
            <person name="Gou H."/>
            <person name="Gan J."/>
            <person name="Liu J."/>
            <person name="Deng S."/>
            <person name="Gan L."/>
            <person name="Wang X."/>
            <person name="Zhao J."/>
            <person name="Xing H."/>
            <person name="Guo N."/>
        </authorList>
    </citation>
    <scope>FUNCTION</scope>
    <scope>DISRUPTION PHENOTYPE</scope>
    <scope>SUBCELLULAR LOCATION</scope>
    <scope>INTERACTION WITH HAL3A AND HAL3B</scope>
    <scope>TISSUE SPECIFICITY</scope>
    <scope>INDUCTION BY SALT; MANNITOL AND ABSCISIC ACID</scope>
    <source>
        <strain>cv. Suxie No.1</strain>
        <strain>cv. Tianlong No.1</strain>
    </source>
</reference>
<comment type="function">
    <text evidence="1 4">PPIases accelerate the folding of proteins. It catalyzes the cis-trans isomerization of proline imidic peptide bonds in oligopeptides (By similarity). Promotes salt tolerance, probably by maintaining the Na(+)/K(+) ratio and good photosynthetic state (Ref.2). May also be involved in the regulation of abscisic acid (ABA) and Ca(2+) signaling pathways (Ref.2).</text>
</comment>
<comment type="catalytic activity">
    <reaction evidence="2">
        <text>[protein]-peptidylproline (omega=180) = [protein]-peptidylproline (omega=0)</text>
        <dbReference type="Rhea" id="RHEA:16237"/>
        <dbReference type="Rhea" id="RHEA-COMP:10747"/>
        <dbReference type="Rhea" id="RHEA-COMP:10748"/>
        <dbReference type="ChEBI" id="CHEBI:83833"/>
        <dbReference type="ChEBI" id="CHEBI:83834"/>
        <dbReference type="EC" id="5.2.1.8"/>
    </reaction>
</comment>
<comment type="activity regulation">
    <text evidence="1">Binds cyclosporin A (CsA). CsA mediates some of its effects via an inhibitory action on PPIase.</text>
</comment>
<comment type="subunit">
    <text evidence="4">Interacts with HAL3a and HAL3b in the plasma membrane and nucleus.</text>
</comment>
<comment type="subcellular location">
    <subcellularLocation>
        <location evidence="4">Cell membrane</location>
    </subcellularLocation>
    <subcellularLocation>
        <location evidence="4">Nucleus</location>
    </subcellularLocation>
</comment>
<comment type="tissue specificity">
    <text evidence="4">Mainly expressed in stems, leaves and cotyledons, and, to a lower extent, in roots.</text>
</comment>
<comment type="induction">
    <text evidence="4">Induced by salt (NaCl), osmotic stress (mannitol) and abscisic acid (ABA).</text>
</comment>
<comment type="disruption phenotype">
    <text evidence="4">Decreased salt tolerance.</text>
</comment>
<comment type="miscellaneous">
    <text evidence="7">The cv. Suxie No.1 (SX1) is more tolerant to salt stress than the cv. Tianlong No.1 (TL1).</text>
</comment>
<comment type="similarity">
    <text evidence="6">Belongs to the cyclophilin-type PPIase family.</text>
</comment>
<accession>A0A0R0H9T5</accession>
<keyword id="KW-1003">Cell membrane</keyword>
<keyword id="KW-0143">Chaperone</keyword>
<keyword id="KW-0413">Isomerase</keyword>
<keyword id="KW-0472">Membrane</keyword>
<keyword id="KW-0539">Nucleus</keyword>
<keyword id="KW-1185">Reference proteome</keyword>
<keyword id="KW-0697">Rotamase</keyword>
<keyword id="KW-0346">Stress response</keyword>
<protein>
    <recommendedName>
        <fullName evidence="1">Peptidyl-prolyl cis-trans isomerase 2</fullName>
        <shortName evidence="1">PPIase 2</shortName>
        <ecNumber evidence="2">5.2.1.8</ecNumber>
    </recommendedName>
    <alternativeName>
        <fullName evidence="5">Cyclophilin 2</fullName>
        <shortName evidence="5">GmCYP2</shortName>
    </alternativeName>
</protein>
<sequence>MPNPKVFFDMTIGGQPAGRIVMELYADVTPSTAENFRALCTGEKGAGRSGKPLHYKGSSFHRVIPNFMCQGGDFTAGNGTGGESIYGAKFADENFVKKHTGPGILSMANAGPGTNGSQFFICTTKTEWLDGKHVVFGQVVEGMDVVKEIEKVGSSSGRTAKPVVVADCGQLS</sequence>
<name>CYP2_SOYBN</name>
<gene>
    <name evidence="5" type="primary">CYP2</name>
    <name evidence="8" type="ORF">GLYMA_12G024700</name>
</gene>
<dbReference type="EC" id="5.2.1.8" evidence="2"/>
<dbReference type="EMBL" id="CM000845">
    <property type="protein sequence ID" value="KRH24153.1"/>
    <property type="molecule type" value="Genomic_DNA"/>
</dbReference>
<dbReference type="RefSeq" id="NP_001344008.1">
    <property type="nucleotide sequence ID" value="NM_001357079.1"/>
</dbReference>
<dbReference type="RefSeq" id="XP_014619912.1">
    <property type="nucleotide sequence ID" value="XM_014764426.1"/>
</dbReference>
<dbReference type="SMR" id="A0A0R0H9T5"/>
<dbReference type="FunCoup" id="A0A0R0H9T5">
    <property type="interactions" value="3294"/>
</dbReference>
<dbReference type="STRING" id="3847.A0A0R0H9T5"/>
<dbReference type="PaxDb" id="3847-GLYMA12G02790.2"/>
<dbReference type="EnsemblPlants" id="KRH24153">
    <property type="protein sequence ID" value="KRH24153"/>
    <property type="gene ID" value="GLYMA_12G024700"/>
</dbReference>
<dbReference type="GeneID" id="106795232"/>
<dbReference type="Gramene" id="KRH24153">
    <property type="protein sequence ID" value="KRH24153"/>
    <property type="gene ID" value="GLYMA_12G024700"/>
</dbReference>
<dbReference type="InParanoid" id="A0A0R0H9T5"/>
<dbReference type="OMA" id="TVKQTSW"/>
<dbReference type="OrthoDB" id="339082at2759"/>
<dbReference type="Proteomes" id="UP000008827">
    <property type="component" value="Chromosome 12"/>
</dbReference>
<dbReference type="GO" id="GO:0005737">
    <property type="term" value="C:cytoplasm"/>
    <property type="evidence" value="ECO:0000318"/>
    <property type="project" value="GO_Central"/>
</dbReference>
<dbReference type="GO" id="GO:0005634">
    <property type="term" value="C:nucleus"/>
    <property type="evidence" value="ECO:0000314"/>
    <property type="project" value="UniProtKB"/>
</dbReference>
<dbReference type="GO" id="GO:0005886">
    <property type="term" value="C:plasma membrane"/>
    <property type="evidence" value="ECO:0000314"/>
    <property type="project" value="UniProtKB"/>
</dbReference>
<dbReference type="GO" id="GO:0016018">
    <property type="term" value="F:cyclosporin A binding"/>
    <property type="evidence" value="ECO:0000318"/>
    <property type="project" value="GO_Central"/>
</dbReference>
<dbReference type="GO" id="GO:0003755">
    <property type="term" value="F:peptidyl-prolyl cis-trans isomerase activity"/>
    <property type="evidence" value="ECO:0000318"/>
    <property type="project" value="GO_Central"/>
</dbReference>
<dbReference type="GO" id="GO:1901002">
    <property type="term" value="P:positive regulation of response to salt stress"/>
    <property type="evidence" value="ECO:0000315"/>
    <property type="project" value="UniProtKB"/>
</dbReference>
<dbReference type="GO" id="GO:0006457">
    <property type="term" value="P:protein folding"/>
    <property type="evidence" value="ECO:0000318"/>
    <property type="project" value="GO_Central"/>
</dbReference>
<dbReference type="GO" id="GO:0009737">
    <property type="term" value="P:response to abscisic acid"/>
    <property type="evidence" value="ECO:0000270"/>
    <property type="project" value="UniProtKB"/>
</dbReference>
<dbReference type="GO" id="GO:0010555">
    <property type="term" value="P:response to mannitol"/>
    <property type="evidence" value="ECO:0000270"/>
    <property type="project" value="UniProtKB"/>
</dbReference>
<dbReference type="GO" id="GO:1902074">
    <property type="term" value="P:response to salt"/>
    <property type="evidence" value="ECO:0000270"/>
    <property type="project" value="UniProtKB"/>
</dbReference>
<dbReference type="CDD" id="cd01926">
    <property type="entry name" value="cyclophilin_ABH_like"/>
    <property type="match status" value="1"/>
</dbReference>
<dbReference type="FunFam" id="2.40.100.10:FF:000002">
    <property type="entry name" value="Peptidyl-prolyl cis-trans isomerase"/>
    <property type="match status" value="1"/>
</dbReference>
<dbReference type="Gene3D" id="2.40.100.10">
    <property type="entry name" value="Cyclophilin-like"/>
    <property type="match status" value="1"/>
</dbReference>
<dbReference type="InterPro" id="IPR029000">
    <property type="entry name" value="Cyclophilin-like_dom_sf"/>
</dbReference>
<dbReference type="InterPro" id="IPR024936">
    <property type="entry name" value="Cyclophilin-type_PPIase"/>
</dbReference>
<dbReference type="InterPro" id="IPR020892">
    <property type="entry name" value="Cyclophilin-type_PPIase_CS"/>
</dbReference>
<dbReference type="InterPro" id="IPR002130">
    <property type="entry name" value="Cyclophilin-type_PPIase_dom"/>
</dbReference>
<dbReference type="PANTHER" id="PTHR11071">
    <property type="entry name" value="PEPTIDYL-PROLYL CIS-TRANS ISOMERASE"/>
    <property type="match status" value="1"/>
</dbReference>
<dbReference type="PANTHER" id="PTHR11071:SF561">
    <property type="entry name" value="PEPTIDYL-PROLYL CIS-TRANS ISOMERASE D-RELATED"/>
    <property type="match status" value="1"/>
</dbReference>
<dbReference type="Pfam" id="PF00160">
    <property type="entry name" value="Pro_isomerase"/>
    <property type="match status" value="1"/>
</dbReference>
<dbReference type="PIRSF" id="PIRSF001467">
    <property type="entry name" value="Peptidylpro_ismrse"/>
    <property type="match status" value="1"/>
</dbReference>
<dbReference type="PRINTS" id="PR00153">
    <property type="entry name" value="CSAPPISMRASE"/>
</dbReference>
<dbReference type="SUPFAM" id="SSF50891">
    <property type="entry name" value="Cyclophilin-like"/>
    <property type="match status" value="1"/>
</dbReference>
<dbReference type="PROSITE" id="PS00170">
    <property type="entry name" value="CSA_PPIASE_1"/>
    <property type="match status" value="1"/>
</dbReference>
<dbReference type="PROSITE" id="PS50072">
    <property type="entry name" value="CSA_PPIASE_2"/>
    <property type="match status" value="1"/>
</dbReference>
<proteinExistence type="evidence at protein level"/>
<feature type="chain" id="PRO_0000462131" description="Peptidyl-prolyl cis-trans isomerase 2">
    <location>
        <begin position="1"/>
        <end position="172"/>
    </location>
</feature>
<feature type="domain" description="PPIase cyclophilin-type" evidence="3">
    <location>
        <begin position="7"/>
        <end position="170"/>
    </location>
</feature>
<organism>
    <name type="scientific">Glycine max</name>
    <name type="common">Soybean</name>
    <name type="synonym">Glycine hispida</name>
    <dbReference type="NCBI Taxonomy" id="3847"/>
    <lineage>
        <taxon>Eukaryota</taxon>
        <taxon>Viridiplantae</taxon>
        <taxon>Streptophyta</taxon>
        <taxon>Embryophyta</taxon>
        <taxon>Tracheophyta</taxon>
        <taxon>Spermatophyta</taxon>
        <taxon>Magnoliopsida</taxon>
        <taxon>eudicotyledons</taxon>
        <taxon>Gunneridae</taxon>
        <taxon>Pentapetalae</taxon>
        <taxon>rosids</taxon>
        <taxon>fabids</taxon>
        <taxon>Fabales</taxon>
        <taxon>Fabaceae</taxon>
        <taxon>Papilionoideae</taxon>
        <taxon>50 kb inversion clade</taxon>
        <taxon>NPAAA clade</taxon>
        <taxon>indigoferoid/millettioid clade</taxon>
        <taxon>Phaseoleae</taxon>
        <taxon>Glycine</taxon>
        <taxon>Glycine subgen. Soja</taxon>
    </lineage>
</organism>
<evidence type="ECO:0000250" key="1">
    <source>
        <dbReference type="UniProtKB" id="O49886"/>
    </source>
</evidence>
<evidence type="ECO:0000250" key="2">
    <source>
        <dbReference type="UniProtKB" id="P62937"/>
    </source>
</evidence>
<evidence type="ECO:0000255" key="3">
    <source>
        <dbReference type="PROSITE-ProRule" id="PRU00156"/>
    </source>
</evidence>
<evidence type="ECO:0000269" key="4">
    <source ref="2"/>
</evidence>
<evidence type="ECO:0000303" key="5">
    <source ref="2"/>
</evidence>
<evidence type="ECO:0000305" key="6"/>
<evidence type="ECO:0000305" key="7">
    <source ref="2"/>
</evidence>
<evidence type="ECO:0000312" key="8">
    <source>
        <dbReference type="EMBL" id="KRH24153.1"/>
    </source>
</evidence>